<proteinExistence type="evidence at protein level"/>
<dbReference type="EMBL" id="M11814">
    <property type="protein sequence ID" value="AAA19671.1"/>
    <property type="molecule type" value="mRNA"/>
</dbReference>
<dbReference type="EMBL" id="X03894">
    <property type="protein sequence ID" value="CAA27531.1"/>
    <property type="molecule type" value="mRNA"/>
</dbReference>
<dbReference type="EMBL" id="BC088156">
    <property type="protein sequence ID" value="AAH88156.1"/>
    <property type="molecule type" value="mRNA"/>
</dbReference>
<dbReference type="EMBL" id="X12925">
    <property type="protein sequence ID" value="CAA31392.1"/>
    <property type="molecule type" value="Genomic_DNA"/>
</dbReference>
<dbReference type="PIR" id="A26294">
    <property type="entry name" value="A26294"/>
</dbReference>
<dbReference type="RefSeq" id="NP_036814.1">
    <property type="nucleotide sequence ID" value="NM_012682.2"/>
</dbReference>
<dbReference type="SMR" id="P04633"/>
<dbReference type="BioGRID" id="246975">
    <property type="interactions" value="1"/>
</dbReference>
<dbReference type="FunCoup" id="P04633">
    <property type="interactions" value="73"/>
</dbReference>
<dbReference type="STRING" id="10116.ENSRNOP00000004900"/>
<dbReference type="iPTMnet" id="P04633"/>
<dbReference type="PhosphoSitePlus" id="P04633"/>
<dbReference type="PaxDb" id="10116-ENSRNOP00000004900"/>
<dbReference type="Ensembl" id="ENSRNOT00000004900.5">
    <property type="protein sequence ID" value="ENSRNOP00000004900.2"/>
    <property type="gene ID" value="ENSRNOG00000003580.5"/>
</dbReference>
<dbReference type="GeneID" id="24860"/>
<dbReference type="KEGG" id="rno:24860"/>
<dbReference type="AGR" id="RGD:3931"/>
<dbReference type="CTD" id="7350"/>
<dbReference type="RGD" id="3931">
    <property type="gene designation" value="Ucp1"/>
</dbReference>
<dbReference type="eggNOG" id="KOG0753">
    <property type="taxonomic scope" value="Eukaryota"/>
</dbReference>
<dbReference type="GeneTree" id="ENSGT00940000160382"/>
<dbReference type="HOGENOM" id="CLU_015166_14_2_1"/>
<dbReference type="InParanoid" id="P04633"/>
<dbReference type="OMA" id="YTSVPNC"/>
<dbReference type="OrthoDB" id="448427at2759"/>
<dbReference type="PhylomeDB" id="P04633"/>
<dbReference type="TreeFam" id="TF323211"/>
<dbReference type="Reactome" id="R-RNO-166187">
    <property type="pathway name" value="Mitochondrial Uncoupling"/>
</dbReference>
<dbReference type="Reactome" id="R-RNO-167826">
    <property type="pathway name" value="The fatty acid cycling model"/>
</dbReference>
<dbReference type="PRO" id="PR:P04633"/>
<dbReference type="Proteomes" id="UP000002494">
    <property type="component" value="Chromosome 19"/>
</dbReference>
<dbReference type="Bgee" id="ENSRNOG00000003580">
    <property type="expression patterns" value="Expressed in thymus and 4 other cell types or tissues"/>
</dbReference>
<dbReference type="GO" id="GO:0005740">
    <property type="term" value="C:mitochondrial envelope"/>
    <property type="evidence" value="ECO:0000266"/>
    <property type="project" value="RGD"/>
</dbReference>
<dbReference type="GO" id="GO:0005743">
    <property type="term" value="C:mitochondrial inner membrane"/>
    <property type="evidence" value="ECO:0000250"/>
    <property type="project" value="UniProtKB"/>
</dbReference>
<dbReference type="GO" id="GO:0005739">
    <property type="term" value="C:mitochondrion"/>
    <property type="evidence" value="ECO:0000314"/>
    <property type="project" value="UniProtKB"/>
</dbReference>
<dbReference type="GO" id="GO:1901612">
    <property type="term" value="F:cardiolipin binding"/>
    <property type="evidence" value="ECO:0000250"/>
    <property type="project" value="UniProtKB"/>
</dbReference>
<dbReference type="GO" id="GO:0019003">
    <property type="term" value="F:GDP binding"/>
    <property type="evidence" value="ECO:0000314"/>
    <property type="project" value="UniProtKB"/>
</dbReference>
<dbReference type="GO" id="GO:0005525">
    <property type="term" value="F:GTP binding"/>
    <property type="evidence" value="ECO:0000314"/>
    <property type="project" value="UniProtKB"/>
</dbReference>
<dbReference type="GO" id="GO:0036041">
    <property type="term" value="F:long-chain fatty acid binding"/>
    <property type="evidence" value="ECO:0000250"/>
    <property type="project" value="UniProtKB"/>
</dbReference>
<dbReference type="GO" id="GO:0017077">
    <property type="term" value="F:oxidative phosphorylation uncoupler activity"/>
    <property type="evidence" value="ECO:0000314"/>
    <property type="project" value="UniProtKB"/>
</dbReference>
<dbReference type="GO" id="GO:0015078">
    <property type="term" value="F:proton transmembrane transporter activity"/>
    <property type="evidence" value="ECO:0000266"/>
    <property type="project" value="RGD"/>
</dbReference>
<dbReference type="GO" id="GO:0032555">
    <property type="term" value="F:purine ribonucleotide binding"/>
    <property type="evidence" value="ECO:0000266"/>
    <property type="project" value="RGD"/>
</dbReference>
<dbReference type="GO" id="GO:0022857">
    <property type="term" value="F:transmembrane transporter activity"/>
    <property type="evidence" value="ECO:0000315"/>
    <property type="project" value="UniProtKB"/>
</dbReference>
<dbReference type="GO" id="GO:1990845">
    <property type="term" value="P:adaptive thermogenesis"/>
    <property type="evidence" value="ECO:0000250"/>
    <property type="project" value="UniProtKB"/>
</dbReference>
<dbReference type="GO" id="GO:0050873">
    <property type="term" value="P:brown fat cell differentiation"/>
    <property type="evidence" value="ECO:0000266"/>
    <property type="project" value="RGD"/>
</dbReference>
<dbReference type="GO" id="GO:0070417">
    <property type="term" value="P:cellular response to cold"/>
    <property type="evidence" value="ECO:0000266"/>
    <property type="project" value="RGD"/>
</dbReference>
<dbReference type="GO" id="GO:1903495">
    <property type="term" value="P:cellular response to dehydroepiandrosterone"/>
    <property type="evidence" value="ECO:0000270"/>
    <property type="project" value="RGD"/>
</dbReference>
<dbReference type="GO" id="GO:0071398">
    <property type="term" value="P:cellular response to fatty acid"/>
    <property type="evidence" value="ECO:0000314"/>
    <property type="project" value="UniProtKB"/>
</dbReference>
<dbReference type="GO" id="GO:0032870">
    <property type="term" value="P:cellular response to hormone stimulus"/>
    <property type="evidence" value="ECO:0000270"/>
    <property type="project" value="RGD"/>
</dbReference>
<dbReference type="GO" id="GO:0034614">
    <property type="term" value="P:cellular response to reactive oxygen species"/>
    <property type="evidence" value="ECO:0000250"/>
    <property type="project" value="UniProtKB"/>
</dbReference>
<dbReference type="GO" id="GO:0002024">
    <property type="term" value="P:diet induced thermogenesis"/>
    <property type="evidence" value="ECO:0000266"/>
    <property type="project" value="RGD"/>
</dbReference>
<dbReference type="GO" id="GO:0006091">
    <property type="term" value="P:generation of precursor metabolites and energy"/>
    <property type="evidence" value="ECO:0000304"/>
    <property type="project" value="RGD"/>
</dbReference>
<dbReference type="GO" id="GO:1990542">
    <property type="term" value="P:mitochondrial transmembrane transport"/>
    <property type="evidence" value="ECO:0000314"/>
    <property type="project" value="UniProtKB"/>
</dbReference>
<dbReference type="GO" id="GO:0006839">
    <property type="term" value="P:mitochondrial transport"/>
    <property type="evidence" value="ECO:0000314"/>
    <property type="project" value="RGD"/>
</dbReference>
<dbReference type="GO" id="GO:0120162">
    <property type="term" value="P:positive regulation of cold-induced thermogenesis"/>
    <property type="evidence" value="ECO:0000250"/>
    <property type="project" value="YuBioLab"/>
</dbReference>
<dbReference type="GO" id="GO:0009893">
    <property type="term" value="P:positive regulation of metabolic process"/>
    <property type="evidence" value="ECO:0000304"/>
    <property type="project" value="RGD"/>
</dbReference>
<dbReference type="GO" id="GO:1902600">
    <property type="term" value="P:proton transmembrane transport"/>
    <property type="evidence" value="ECO:0000314"/>
    <property type="project" value="UniProtKB"/>
</dbReference>
<dbReference type="GO" id="GO:1903426">
    <property type="term" value="P:regulation of reactive oxygen species biosynthetic process"/>
    <property type="evidence" value="ECO:0000266"/>
    <property type="project" value="RGD"/>
</dbReference>
<dbReference type="GO" id="GO:0006357">
    <property type="term" value="P:regulation of transcription by RNA polymerase II"/>
    <property type="evidence" value="ECO:0000266"/>
    <property type="project" value="RGD"/>
</dbReference>
<dbReference type="GO" id="GO:0009409">
    <property type="term" value="P:response to cold"/>
    <property type="evidence" value="ECO:0000318"/>
    <property type="project" value="GO_Central"/>
</dbReference>
<dbReference type="GO" id="GO:0031667">
    <property type="term" value="P:response to nutrient levels"/>
    <property type="evidence" value="ECO:0000250"/>
    <property type="project" value="UniProtKB"/>
</dbReference>
<dbReference type="GO" id="GO:0009266">
    <property type="term" value="P:response to temperature stimulus"/>
    <property type="evidence" value="ECO:0000250"/>
    <property type="project" value="UniProtKB"/>
</dbReference>
<dbReference type="FunFam" id="1.50.40.10:FF:000068">
    <property type="entry name" value="Mitochondrial brown fat uncoupling protein 1"/>
    <property type="match status" value="1"/>
</dbReference>
<dbReference type="Gene3D" id="1.50.40.10">
    <property type="entry name" value="Mitochondrial carrier domain"/>
    <property type="match status" value="1"/>
</dbReference>
<dbReference type="InterPro" id="IPR002067">
    <property type="entry name" value="Mit_carrier"/>
</dbReference>
<dbReference type="InterPro" id="IPR050391">
    <property type="entry name" value="Mito_Metabolite_Transporter"/>
</dbReference>
<dbReference type="InterPro" id="IPR018108">
    <property type="entry name" value="Mitochondrial_sb/sol_carrier"/>
</dbReference>
<dbReference type="InterPro" id="IPR023395">
    <property type="entry name" value="Mt_carrier_dom_sf"/>
</dbReference>
<dbReference type="PANTHER" id="PTHR45618">
    <property type="entry name" value="MITOCHONDRIAL DICARBOXYLATE CARRIER-RELATED"/>
    <property type="match status" value="1"/>
</dbReference>
<dbReference type="Pfam" id="PF00153">
    <property type="entry name" value="Mito_carr"/>
    <property type="match status" value="3"/>
</dbReference>
<dbReference type="PRINTS" id="PR00784">
    <property type="entry name" value="MTUNCOUPLING"/>
</dbReference>
<dbReference type="SUPFAM" id="SSF103506">
    <property type="entry name" value="Mitochondrial carrier"/>
    <property type="match status" value="1"/>
</dbReference>
<dbReference type="PROSITE" id="PS50920">
    <property type="entry name" value="SOLCAR"/>
    <property type="match status" value="3"/>
</dbReference>
<gene>
    <name evidence="15" type="primary">Ucp1</name>
    <name evidence="3" type="synonym">Slc25a7</name>
    <name evidence="12" type="synonym">Ucp</name>
</gene>
<keyword id="KW-0407">Ion channel</keyword>
<keyword id="KW-0406">Ion transport</keyword>
<keyword id="KW-0472">Membrane</keyword>
<keyword id="KW-0496">Mitochondrion</keyword>
<keyword id="KW-0999">Mitochondrion inner membrane</keyword>
<keyword id="KW-0558">Oxidation</keyword>
<keyword id="KW-1185">Reference proteome</keyword>
<keyword id="KW-0677">Repeat</keyword>
<keyword id="KW-0812">Transmembrane</keyword>
<keyword id="KW-1133">Transmembrane helix</keyword>
<keyword id="KW-0813">Transport</keyword>
<sequence length="307" mass="33212">MVSSTTSEVQPTMGVKIFSAGVSACLADIITFPLDTAKVRLQIQGEGQASSTIRYKGVLGTITTLAKTEGLPKLYSGLPAGIQRQISFASLRIGLYDTVQEYFSSGRETPASLGSKISAGLMTGGVAVFIGQPTEVVKVRMQAQSHLHGIKPRYTGTYNAYRVIATTESLSTLWKGTTPNLMRNVIINCTELVTYDLMKGALVNHHILADDVPCHLLSALVAGFCTTLLASPVDVVKTRFINSLPGQYPSVPSCAMTMYTKEGPAAFFKGFAPSFLRLGSWNVIMFVCFEQLKKELMKSRQTVDCTT</sequence>
<feature type="chain" id="PRO_0000090662" description="Mitochondrial brown fat uncoupling protein 1">
    <location>
        <begin position="1"/>
        <end position="307"/>
    </location>
</feature>
<feature type="topological domain" description="Mitochondrial intermembrane" evidence="11">
    <location>
        <begin position="1"/>
        <end position="10"/>
    </location>
</feature>
<feature type="transmembrane region" description="Helical; Name=1" evidence="5">
    <location>
        <begin position="11"/>
        <end position="32"/>
    </location>
</feature>
<feature type="topological domain" description="Mitochondrial matrix" evidence="11">
    <location>
        <begin position="33"/>
        <end position="73"/>
    </location>
</feature>
<feature type="transmembrane region" description="Helical; Name=2" evidence="5">
    <location>
        <begin position="74"/>
        <end position="96"/>
    </location>
</feature>
<feature type="topological domain" description="Mitochondrial intermembrane" evidence="11">
    <location>
        <begin position="97"/>
        <end position="116"/>
    </location>
</feature>
<feature type="transmembrane region" description="Helical; Name=3" evidence="5">
    <location>
        <begin position="117"/>
        <end position="133"/>
    </location>
</feature>
<feature type="topological domain" description="Mitochondrial matrix" evidence="11">
    <location>
        <begin position="134"/>
        <end position="178"/>
    </location>
</feature>
<feature type="transmembrane region" description="Helical; Name=4" evidence="5">
    <location>
        <begin position="179"/>
        <end position="195"/>
    </location>
</feature>
<feature type="topological domain" description="Mitochondrial intermembrane" evidence="13">
    <location>
        <begin position="196"/>
        <end position="212"/>
    </location>
</feature>
<feature type="transmembrane region" description="Helical; Name=5" evidence="5">
    <location>
        <begin position="213"/>
        <end position="232"/>
    </location>
</feature>
<feature type="topological domain" description="Mitochondrial matrix" evidence="13">
    <location>
        <begin position="233"/>
        <end position="266"/>
    </location>
</feature>
<feature type="transmembrane region" description="Helical; Name=6" evidence="5">
    <location>
        <begin position="267"/>
        <end position="289"/>
    </location>
</feature>
<feature type="topological domain" description="Mitochondrial intermembrane" evidence="13">
    <location>
        <begin position="290"/>
        <end position="307"/>
    </location>
</feature>
<feature type="repeat" description="Solcar 1">
    <location>
        <begin position="11"/>
        <end position="102"/>
    </location>
</feature>
<feature type="repeat" description="Solcar 2">
    <location>
        <begin position="111"/>
        <end position="201"/>
    </location>
</feature>
<feature type="repeat" description="Solcar 3">
    <location>
        <begin position="210"/>
        <end position="295"/>
    </location>
</feature>
<feature type="binding site" evidence="3">
    <location>
        <position position="56"/>
    </location>
    <ligand>
        <name>fatty acid 16:0</name>
        <dbReference type="ChEBI" id="CHEBI:78123"/>
    </ligand>
</feature>
<feature type="binding site" evidence="3">
    <location>
        <position position="269"/>
    </location>
    <ligand>
        <name>fatty acid 16:0</name>
        <dbReference type="ChEBI" id="CHEBI:78123"/>
    </ligand>
</feature>
<feature type="modified residue" description="Cysteine sulfenic acid (-SOH)" evidence="2">
    <location>
        <position position="254"/>
    </location>
</feature>
<feature type="mutagenesis site" description="No effect on GTP-binding. Loss of fatty acid-induced proton transport; when associated with V-28 and A-31." evidence="6">
    <original>C</original>
    <variation>A</variation>
    <location>
        <position position="25"/>
    </location>
</feature>
<feature type="mutagenesis site" description="No effect on GTP-binding. Decreased fatty acid-induced proton transport. Loss of fatty acid-induced proton transport; when associated with A-25 and A-31." evidence="6">
    <original>D</original>
    <variation>V</variation>
    <location>
        <position position="28"/>
    </location>
</feature>
<feature type="mutagenesis site" description="No effect on GTP-binding. No effect on fatty acid-induced proton transport. Loss of fatty acid-induced proton transport; when associated with A-25 and V-28." evidence="6">
    <original>T</original>
    <variation>A</variation>
    <location>
        <position position="31"/>
    </location>
</feature>
<feature type="mutagenesis site" description="No effect on GTP-binding. Decreased fatty acid-induced proton transport; when associated with L-148." evidence="6">
    <original>H</original>
    <variation>L</variation>
    <location>
        <position position="146"/>
    </location>
</feature>
<feature type="mutagenesis site" description="No effect on GTP-binding. Decreased fatty acid-induced proton transport; when associated with L-146." evidence="6">
    <original>H</original>
    <variation>L</variation>
    <location>
        <position position="148"/>
    </location>
</feature>
<feature type="mutagenesis site" description="No effect on GTP-binding. Decreased fatty acid-induced proton transport." evidence="6">
    <original>R</original>
    <variation>L</variation>
    <location>
        <position position="153"/>
    </location>
</feature>
<protein>
    <recommendedName>
        <fullName evidence="14">Mitochondrial brown fat uncoupling protein 1</fullName>
        <shortName evidence="14">UCP 1</shortName>
    </recommendedName>
    <alternativeName>
        <fullName evidence="3">Solute carrier family 25 member 7</fullName>
    </alternativeName>
    <alternativeName>
        <fullName evidence="1">Thermogenin</fullName>
    </alternativeName>
</protein>
<comment type="function">
    <text evidence="2 6 7 9">Mitochondrial protein responsible for thermogenic respiration, a specialized capacity of brown adipose tissue and beige fat that participates in non-shivering adaptive thermogenesis to temperature and diet variations and more generally to the regulation of energy balance (By similarity). Functions as a long-chain fatty acid/LCFA and proton symporter, simultaneously transporting one LCFA and one proton through the inner mitochondrial membrane. However, LCFAs remaining associated with the transporter via their hydrophobic tails, it results in an apparent transport of protons activated by LCFAs (PubMed:12479871, PubMed:16814247, PubMed:22952235). Thereby, dissipates the mitochondrial proton gradient and converts the energy of substrate oxydation into heat instead of ATP. Regulates the production of reactive oxygen species/ROS by mitochondria (By similarity).</text>
</comment>
<comment type="catalytic activity">
    <reaction evidence="6 9">
        <text>H(+)(in) = H(+)(out)</text>
        <dbReference type="Rhea" id="RHEA:34979"/>
        <dbReference type="ChEBI" id="CHEBI:15378"/>
    </reaction>
</comment>
<comment type="activity regulation">
    <text evidence="2">Has no constitutive proton transporter activity and has to be activated by long-chain fatty acids/LCFAs. Inhibited by purine nucleotides. Both purine nucleotides and LCFAs bind the cytosolic side of the transporter and directly compete to activate or inhibit it (PubMed:22952235). Activated by noradrenaline and reactive oxygen species. Despite lacking canonical translational encoding for selenocysteine, a small pool of the protein has been observed to selectively incorporate selenocysteine at 'Cys-254'. Selenocysteine-modified protein is highly sensitive to redox modification and may constitute a pool of protein highly sensitive to activation by elevated levels of reactive oxygen species (ROS) (By similarity).</text>
</comment>
<comment type="subunit">
    <text evidence="3 4 6 9">Most probably functions as a monomer (By similarity). Binds one purine nucleotide per monomer (PubMed:12479871, PubMed:22952235). However, has also been suggested to function as a homodimer or a homotetramer (By similarity). Tightly associates with cardiolipin in the mitochondrion inner membrane; may stabilize and regulate its activity (By similarity).</text>
</comment>
<comment type="subcellular location">
    <subcellularLocation>
        <location evidence="2">Mitochondrion inner membrane</location>
        <topology evidence="11">Multi-pass membrane protein</topology>
    </subcellularLocation>
</comment>
<comment type="tissue specificity">
    <text evidence="10">Brown adipose tissue.</text>
</comment>
<comment type="PTM">
    <text evidence="8">May undergo ubiquitin-mediated proteasomal degradation.</text>
</comment>
<comment type="PTM">
    <text evidence="2">May undergo sulfenylation upon cold exposure. May increase the sensitivity of UCP1 thermogenic function to the activation by noradrenaline probably through structural effects.</text>
</comment>
<comment type="similarity">
    <text evidence="14">Belongs to the mitochondrial carrier (TC 2.A.29) family.</text>
</comment>
<reference key="1">
    <citation type="journal article" date="1986" name="J. Biol. Chem.">
        <title>Complete cDNA-derived amino acid sequence of rat brown fat uncoupling protein.</title>
        <authorList>
            <person name="Bouillaud F."/>
            <person name="Weissenbach J."/>
            <person name="Ricquier D."/>
        </authorList>
    </citation>
    <scope>NUCLEOTIDE SEQUENCE [MRNA]</scope>
    <scope>TISSUE SPECIFICITY</scope>
</reference>
<reference key="2">
    <citation type="journal article" date="1986" name="Nucleic Acids Res.">
        <title>Complete nucleotide and derived amino acid sequence of cDNA encoding the mitochondrial uncoupling protein of rat brown adipose tissue: lack of a mitochondrial targeting presequence.</title>
        <authorList>
            <person name="Ridley R.G."/>
            <person name="Patel H.V."/>
            <person name="Gerber G.E."/>
            <person name="Morton R.C."/>
            <person name="Freeman K.B."/>
        </authorList>
    </citation>
    <scope>NUCLEOTIDE SEQUENCE [MRNA]</scope>
</reference>
<reference key="3">
    <citation type="journal article" date="1988" name="Biochem. Biophys. Res. Commun.">
        <title>The gene for rat uncoupling protein: complete sequence, structure of primary transcript and evolutionary relationship between exons.</title>
        <authorList>
            <person name="Bouillaud F."/>
            <person name="Raimbault S."/>
            <person name="Ricquier D."/>
        </authorList>
    </citation>
    <scope>NUCLEOTIDE SEQUENCE [GENOMIC DNA]</scope>
    <source>
        <strain>Wistar</strain>
    </source>
</reference>
<reference key="4">
    <citation type="journal article" date="2004" name="Genome Res.">
        <title>The status, quality, and expansion of the NIH full-length cDNA project: the Mammalian Gene Collection (MGC).</title>
        <authorList>
            <consortium name="The MGC Project Team"/>
        </authorList>
    </citation>
    <scope>NUCLEOTIDE SEQUENCE [LARGE SCALE MRNA]</scope>
    <source>
        <tissue>Thymus</tissue>
    </source>
</reference>
<reference key="5">
    <citation type="journal article" date="1986" name="Biosci. Rep.">
        <title>Immunological detection of cDNA clones encoding the uncoupling protein of brown adipose tissue: evidence for an antigenic determinant within the C-terminal eleven amino acids.</title>
        <authorList>
            <person name="Ridley R.G."/>
            <person name="Patel H.V."/>
            <person name="Parfett C.L."/>
            <person name="Olynyk K.A."/>
            <person name="Reichling S."/>
            <person name="Freeman K.B."/>
        </authorList>
    </citation>
    <scope>NUCLEOTIDE SEQUENCE [MRNA] OF 254-307</scope>
</reference>
<reference key="6">
    <citation type="journal article" date="1993" name="EMBO J.">
        <title>The topology of the brown adipose tissue mitochondrial uncoupling protein determined with antibodies against its antigenic sites revealed by a library of fusion proteins.</title>
        <authorList>
            <person name="Miroux B."/>
            <person name="Frossard V."/>
            <person name="Raimbault S."/>
            <person name="Ricquier D."/>
            <person name="Bouillaud F."/>
        </authorList>
    </citation>
    <scope>TOPOLOGY</scope>
</reference>
<reference key="7">
    <citation type="journal article" date="2003" name="Int. J. Biochem. Cell Biol.">
        <title>Substitutional mutations in the uncoupling protein-specific sequences of mitochondrial uncoupling protein UCP1 lead to the reduction of fatty acid-induced H+ uniport.</title>
        <authorList>
            <person name="Urbankova E."/>
            <person name="Hanak P."/>
            <person name="Skobisova E."/>
            <person name="Ruzicka M."/>
            <person name="Jezek P."/>
        </authorList>
    </citation>
    <scope>FUNCTION</scope>
    <scope>TRANSPORTER ACTIVITY</scope>
    <scope>GTP-BINDING</scope>
    <scope>MUTAGENESIS OF CYS-25; ASP-28; THR-31; HIS-146; HIS-148 AND ARG-153</scope>
</reference>
<reference key="8">
    <citation type="journal article" date="2006" name="Biochim. Biophys. Acta">
        <title>Fatty acid activation of the uncoupling proteins requires the presence of the central matrix loop from UCP1.</title>
        <authorList>
            <person name="Jimenez-Jimenez J."/>
            <person name="Ledesma A."/>
            <person name="Zaragoza P."/>
            <person name="Gonzalez-Barroso M.M."/>
            <person name="Rial E."/>
        </authorList>
    </citation>
    <scope>FUNCTION</scope>
</reference>
<reference key="9">
    <citation type="journal article" date="2012" name="Biochim. Biophys. Acta">
        <title>A role for ubiquitinylation and the cytosolic proteasome in turnover of mitochondrial uncoupling protein 1 (UCP1).</title>
        <authorList>
            <person name="Clarke K.J."/>
            <person name="Adams A.E."/>
            <person name="Manzke L.H."/>
            <person name="Pearson T.W."/>
            <person name="Borchers C.H."/>
            <person name="Porter R.K."/>
        </authorList>
    </citation>
    <scope>UBIQUITIN-MEDIATED PROTEASOMAL DEGRADATION</scope>
</reference>
<reference key="10">
    <citation type="journal article" date="2012" name="J. Biol. Chem.">
        <title>Fatty acids change the conformation of uncoupling protein 1 (UCP1).</title>
        <authorList>
            <person name="Divakaruni A.S."/>
            <person name="Humphrey D.M."/>
            <person name="Brand M.D."/>
        </authorList>
    </citation>
    <scope>FUNCTION</scope>
    <scope>TRANSPORTER ACTIVITY</scope>
    <scope>ACTIVITY REGULATION</scope>
    <scope>PURINE NUCLEOTIDE-BINDING</scope>
</reference>
<accession>P04633</accession>
<name>UCP1_RAT</name>
<evidence type="ECO:0000250" key="1">
    <source>
        <dbReference type="UniProtKB" id="P04575"/>
    </source>
</evidence>
<evidence type="ECO:0000250" key="2">
    <source>
        <dbReference type="UniProtKB" id="P12242"/>
    </source>
</evidence>
<evidence type="ECO:0000250" key="3">
    <source>
        <dbReference type="UniProtKB" id="P25874"/>
    </source>
</evidence>
<evidence type="ECO:0000250" key="4">
    <source>
        <dbReference type="UniProtKB" id="W5PSH7"/>
    </source>
</evidence>
<evidence type="ECO:0000255" key="5"/>
<evidence type="ECO:0000269" key="6">
    <source>
    </source>
</evidence>
<evidence type="ECO:0000269" key="7">
    <source>
    </source>
</evidence>
<evidence type="ECO:0000269" key="8">
    <source>
    </source>
</evidence>
<evidence type="ECO:0000269" key="9">
    <source>
    </source>
</evidence>
<evidence type="ECO:0000269" key="10">
    <source>
    </source>
</evidence>
<evidence type="ECO:0000269" key="11">
    <source>
    </source>
</evidence>
<evidence type="ECO:0000303" key="12">
    <source>
    </source>
</evidence>
<evidence type="ECO:0000303" key="13">
    <source>
    </source>
</evidence>
<evidence type="ECO:0000305" key="14"/>
<evidence type="ECO:0000312" key="15">
    <source>
        <dbReference type="RGD" id="3931"/>
    </source>
</evidence>
<organism>
    <name type="scientific">Rattus norvegicus</name>
    <name type="common">Rat</name>
    <dbReference type="NCBI Taxonomy" id="10116"/>
    <lineage>
        <taxon>Eukaryota</taxon>
        <taxon>Metazoa</taxon>
        <taxon>Chordata</taxon>
        <taxon>Craniata</taxon>
        <taxon>Vertebrata</taxon>
        <taxon>Euteleostomi</taxon>
        <taxon>Mammalia</taxon>
        <taxon>Eutheria</taxon>
        <taxon>Euarchontoglires</taxon>
        <taxon>Glires</taxon>
        <taxon>Rodentia</taxon>
        <taxon>Myomorpha</taxon>
        <taxon>Muroidea</taxon>
        <taxon>Muridae</taxon>
        <taxon>Murinae</taxon>
        <taxon>Rattus</taxon>
    </lineage>
</organism>